<accession>Q15X57</accession>
<evidence type="ECO:0000255" key="1">
    <source>
        <dbReference type="HAMAP-Rule" id="MF_01337"/>
    </source>
</evidence>
<evidence type="ECO:0000305" key="2"/>
<comment type="function">
    <text evidence="1">This is one of the proteins that bind and probably mediate the attachment of the 5S RNA into the large ribosomal subunit, where it forms part of the central protuberance.</text>
</comment>
<comment type="subunit">
    <text evidence="1">Part of the 50S ribosomal subunit; part of the 5S rRNA/L5/L18/L25 subcomplex. Contacts the 5S and 23S rRNAs.</text>
</comment>
<comment type="similarity">
    <text evidence="1">Belongs to the universal ribosomal protein uL18 family.</text>
</comment>
<reference key="1">
    <citation type="submission" date="2006-06" db="EMBL/GenBank/DDBJ databases">
        <title>Complete sequence of Pseudoalteromonas atlantica T6c.</title>
        <authorList>
            <consortium name="US DOE Joint Genome Institute"/>
            <person name="Copeland A."/>
            <person name="Lucas S."/>
            <person name="Lapidus A."/>
            <person name="Barry K."/>
            <person name="Detter J.C."/>
            <person name="Glavina del Rio T."/>
            <person name="Hammon N."/>
            <person name="Israni S."/>
            <person name="Dalin E."/>
            <person name="Tice H."/>
            <person name="Pitluck S."/>
            <person name="Saunders E."/>
            <person name="Brettin T."/>
            <person name="Bruce D."/>
            <person name="Han C."/>
            <person name="Tapia R."/>
            <person name="Gilna P."/>
            <person name="Schmutz J."/>
            <person name="Larimer F."/>
            <person name="Land M."/>
            <person name="Hauser L."/>
            <person name="Kyrpides N."/>
            <person name="Kim E."/>
            <person name="Karls A.C."/>
            <person name="Bartlett D."/>
            <person name="Higgins B.P."/>
            <person name="Richardson P."/>
        </authorList>
    </citation>
    <scope>NUCLEOTIDE SEQUENCE [LARGE SCALE GENOMIC DNA]</scope>
    <source>
        <strain>T6c / ATCC BAA-1087</strain>
    </source>
</reference>
<sequence length="117" mass="12612">MDKKSARLRRATRARKKISELAAHRLVINRTPRHIYAQLIAPCGSQVLAAASTVEADLRTTVKSTGNAEAAVAVGKAIAERAIEKGIKTVAFDRSGFKYHGRVKALADAAREAGLQF</sequence>
<keyword id="KW-0687">Ribonucleoprotein</keyword>
<keyword id="KW-0689">Ribosomal protein</keyword>
<keyword id="KW-0694">RNA-binding</keyword>
<keyword id="KW-0699">rRNA-binding</keyword>
<dbReference type="EMBL" id="CP000388">
    <property type="protein sequence ID" value="ABG39531.1"/>
    <property type="molecule type" value="Genomic_DNA"/>
</dbReference>
<dbReference type="RefSeq" id="WP_006990566.1">
    <property type="nucleotide sequence ID" value="NC_008228.1"/>
</dbReference>
<dbReference type="SMR" id="Q15X57"/>
<dbReference type="STRING" id="342610.Patl_1005"/>
<dbReference type="KEGG" id="pat:Patl_1005"/>
<dbReference type="eggNOG" id="COG0256">
    <property type="taxonomic scope" value="Bacteria"/>
</dbReference>
<dbReference type="HOGENOM" id="CLU_098841_0_1_6"/>
<dbReference type="OrthoDB" id="9810939at2"/>
<dbReference type="Proteomes" id="UP000001981">
    <property type="component" value="Chromosome"/>
</dbReference>
<dbReference type="GO" id="GO:0022625">
    <property type="term" value="C:cytosolic large ribosomal subunit"/>
    <property type="evidence" value="ECO:0007669"/>
    <property type="project" value="TreeGrafter"/>
</dbReference>
<dbReference type="GO" id="GO:0008097">
    <property type="term" value="F:5S rRNA binding"/>
    <property type="evidence" value="ECO:0007669"/>
    <property type="project" value="TreeGrafter"/>
</dbReference>
<dbReference type="GO" id="GO:0003735">
    <property type="term" value="F:structural constituent of ribosome"/>
    <property type="evidence" value="ECO:0007669"/>
    <property type="project" value="InterPro"/>
</dbReference>
<dbReference type="GO" id="GO:0006412">
    <property type="term" value="P:translation"/>
    <property type="evidence" value="ECO:0007669"/>
    <property type="project" value="UniProtKB-UniRule"/>
</dbReference>
<dbReference type="CDD" id="cd00432">
    <property type="entry name" value="Ribosomal_L18_L5e"/>
    <property type="match status" value="1"/>
</dbReference>
<dbReference type="FunFam" id="3.30.420.100:FF:000001">
    <property type="entry name" value="50S ribosomal protein L18"/>
    <property type="match status" value="1"/>
</dbReference>
<dbReference type="Gene3D" id="3.30.420.100">
    <property type="match status" value="1"/>
</dbReference>
<dbReference type="HAMAP" id="MF_01337_B">
    <property type="entry name" value="Ribosomal_uL18_B"/>
    <property type="match status" value="1"/>
</dbReference>
<dbReference type="InterPro" id="IPR004389">
    <property type="entry name" value="Ribosomal_uL18_bac-type"/>
</dbReference>
<dbReference type="InterPro" id="IPR005484">
    <property type="entry name" value="Ribosomal_uL18_bac/euk"/>
</dbReference>
<dbReference type="NCBIfam" id="TIGR00060">
    <property type="entry name" value="L18_bact"/>
    <property type="match status" value="1"/>
</dbReference>
<dbReference type="PANTHER" id="PTHR12899">
    <property type="entry name" value="39S RIBOSOMAL PROTEIN L18, MITOCHONDRIAL"/>
    <property type="match status" value="1"/>
</dbReference>
<dbReference type="PANTHER" id="PTHR12899:SF3">
    <property type="entry name" value="LARGE RIBOSOMAL SUBUNIT PROTEIN UL18M"/>
    <property type="match status" value="1"/>
</dbReference>
<dbReference type="Pfam" id="PF00861">
    <property type="entry name" value="Ribosomal_L18p"/>
    <property type="match status" value="1"/>
</dbReference>
<dbReference type="SUPFAM" id="SSF53137">
    <property type="entry name" value="Translational machinery components"/>
    <property type="match status" value="1"/>
</dbReference>
<gene>
    <name evidence="1" type="primary">rplR</name>
    <name type="ordered locus">Patl_1005</name>
</gene>
<name>RL18_PSEA6</name>
<proteinExistence type="inferred from homology"/>
<protein>
    <recommendedName>
        <fullName evidence="1">Large ribosomal subunit protein uL18</fullName>
    </recommendedName>
    <alternativeName>
        <fullName evidence="2">50S ribosomal protein L18</fullName>
    </alternativeName>
</protein>
<feature type="chain" id="PRO_1000053084" description="Large ribosomal subunit protein uL18">
    <location>
        <begin position="1"/>
        <end position="117"/>
    </location>
</feature>
<organism>
    <name type="scientific">Pseudoalteromonas atlantica (strain T6c / ATCC BAA-1087)</name>
    <dbReference type="NCBI Taxonomy" id="3042615"/>
    <lineage>
        <taxon>Bacteria</taxon>
        <taxon>Pseudomonadati</taxon>
        <taxon>Pseudomonadota</taxon>
        <taxon>Gammaproteobacteria</taxon>
        <taxon>Alteromonadales</taxon>
        <taxon>Alteromonadaceae</taxon>
        <taxon>Paraglaciecola</taxon>
    </lineage>
</organism>